<organism>
    <name type="scientific">Variola virus</name>
    <dbReference type="NCBI Taxonomy" id="10255"/>
    <lineage>
        <taxon>Viruses</taxon>
        <taxon>Varidnaviria</taxon>
        <taxon>Bamfordvirae</taxon>
        <taxon>Nucleocytoviricota</taxon>
        <taxon>Pokkesviricetes</taxon>
        <taxon>Chitovirales</taxon>
        <taxon>Poxviridae</taxon>
        <taxon>Chordopoxvirinae</taxon>
        <taxon>Orthopoxvirus</taxon>
    </lineage>
</organism>
<comment type="function">
    <text evidence="1">Polymerase that creates the 3'-poly(A) tail of mRNA's.</text>
</comment>
<comment type="catalytic activity">
    <reaction evidence="1">
        <text>RNA(n) + ATP = RNA(n)-3'-adenine ribonucleotide + diphosphate</text>
        <dbReference type="Rhea" id="RHEA:11332"/>
        <dbReference type="Rhea" id="RHEA-COMP:14527"/>
        <dbReference type="Rhea" id="RHEA-COMP:17347"/>
        <dbReference type="ChEBI" id="CHEBI:30616"/>
        <dbReference type="ChEBI" id="CHEBI:33019"/>
        <dbReference type="ChEBI" id="CHEBI:140395"/>
        <dbReference type="ChEBI" id="CHEBI:173115"/>
        <dbReference type="EC" id="2.7.7.19"/>
    </reaction>
</comment>
<comment type="subunit">
    <text evidence="1">Heterodimer of a large (catalytic) subunit and a small (regulatory) subunit.</text>
</comment>
<comment type="induction">
    <text evidence="1">Expressed in the early phase of the viral replicative cycle.</text>
</comment>
<comment type="similarity">
    <text evidence="3">Belongs to the poxviridae poly(A) polymerase catalytic subunit family.</text>
</comment>
<accession>P0DOM2</accession>
<accession>P33809</accession>
<accession>Q76Q36</accession>
<accession>Q85370</accession>
<reference key="1">
    <citation type="journal article" date="1993" name="Nature">
        <title>Potential virulence determinants in terminal regions of variola smallpox virus genome.</title>
        <authorList>
            <person name="Massung R.F."/>
            <person name="Esposito J.J."/>
            <person name="Liu L.I."/>
            <person name="Qi J."/>
            <person name="Utterback T.R."/>
            <person name="Knight J.C."/>
            <person name="Aubin L."/>
            <person name="Yuran T.E."/>
            <person name="Parsons J.M."/>
            <person name="Loparev V.N."/>
            <person name="Selivanov N.A."/>
            <person name="Cavallaro K.F."/>
            <person name="Kerlavage A.R."/>
            <person name="Mahy B.W.J."/>
            <person name="Venter J.C."/>
        </authorList>
    </citation>
    <scope>NUCLEOTIDE SEQUENCE [GENOMIC DNA]</scope>
    <source>
        <strain>Bangladesh-1975</strain>
    </source>
</reference>
<reference key="2">
    <citation type="journal article" date="2000" name="Virology">
        <title>Alastrim smallpox variola minor virus genome DNA sequences.</title>
        <authorList>
            <person name="Shchelkunov S.N."/>
            <person name="Totmenin A.V."/>
            <person name="Loparev V.N."/>
            <person name="Safronov P.F."/>
            <person name="Gutorov V.V."/>
            <person name="Chizhikov V.E."/>
            <person name="Knight J.C."/>
            <person name="Parsons J.M."/>
            <person name="Massung R.F."/>
            <person name="Esposito J.J."/>
        </authorList>
    </citation>
    <scope>NUCLEOTIDE SEQUENCE [LARGE SCALE GENOMIC DNA]</scope>
    <source>
        <strain>Garcia-1966</strain>
    </source>
</reference>
<feature type="chain" id="PRO_0000448115" description="Poly(A) polymerase catalytic subunit">
    <location>
        <begin position="1"/>
        <end position="479"/>
    </location>
</feature>
<feature type="active site" evidence="2">
    <location>
        <position position="202"/>
    </location>
</feature>
<feature type="active site" evidence="2">
    <location>
        <position position="204"/>
    </location>
</feature>
<feature type="binding site" evidence="1">
    <location>
        <position position="202"/>
    </location>
    <ligand>
        <name>Ca(2+)</name>
        <dbReference type="ChEBI" id="CHEBI:29108"/>
        <label>1</label>
    </ligand>
</feature>
<feature type="binding site" evidence="1">
    <location>
        <position position="202"/>
    </location>
    <ligand>
        <name>Ca(2+)</name>
        <dbReference type="ChEBI" id="CHEBI:29108"/>
        <label>2</label>
    </ligand>
</feature>
<feature type="binding site" evidence="1">
    <location>
        <position position="204"/>
    </location>
    <ligand>
        <name>Ca(2+)</name>
        <dbReference type="ChEBI" id="CHEBI:29108"/>
        <label>1</label>
    </ligand>
</feature>
<feature type="binding site" evidence="1">
    <location>
        <position position="204"/>
    </location>
    <ligand>
        <name>Ca(2+)</name>
        <dbReference type="ChEBI" id="CHEBI:29108"/>
        <label>2</label>
    </ligand>
</feature>
<feature type="binding site" evidence="1">
    <location>
        <position position="253"/>
    </location>
    <ligand>
        <name>Ca(2+)</name>
        <dbReference type="ChEBI" id="CHEBI:29108"/>
        <label>2</label>
    </ligand>
</feature>
<feature type="sequence variant" description="In strain: Bangladesh-1975 and Garcia-1966.">
    <original>F</original>
    <variation>L</variation>
    <location>
        <position position="10"/>
    </location>
</feature>
<feature type="sequence variant" description="In strain: Bangladesh-1975 and Garcia-1966.">
    <original>N</original>
    <variation>D</variation>
    <location>
        <position position="110"/>
    </location>
</feature>
<name>PAP1_VARV</name>
<evidence type="ECO:0000250" key="1">
    <source>
        <dbReference type="UniProtKB" id="P23371"/>
    </source>
</evidence>
<evidence type="ECO:0000255" key="2">
    <source>
        <dbReference type="PIRSR" id="PIRSR015693-50"/>
    </source>
</evidence>
<evidence type="ECO:0000305" key="3"/>
<protein>
    <recommendedName>
        <fullName>Poly(A) polymerase catalytic subunit</fullName>
        <ecNumber>2.7.7.19</ecNumber>
    </recommendedName>
    <alternativeName>
        <fullName>Poly(A) polymerase large subunit</fullName>
        <shortName>PAP-L</shortName>
    </alternativeName>
    <alternativeName>
        <fullName>VP55</fullName>
    </alternativeName>
</protein>
<keyword id="KW-0067">ATP-binding</keyword>
<keyword id="KW-0106">Calcium</keyword>
<keyword id="KW-0244">Early protein</keyword>
<keyword id="KW-0479">Metal-binding</keyword>
<keyword id="KW-0507">mRNA processing</keyword>
<keyword id="KW-0547">Nucleotide-binding</keyword>
<keyword id="KW-0804">Transcription</keyword>
<keyword id="KW-0808">Transferase</keyword>
<proteinExistence type="inferred from homology"/>
<dbReference type="EC" id="2.7.7.19"/>
<dbReference type="EMBL" id="L22579">
    <property type="protein sequence ID" value="AAA60790.1"/>
    <property type="molecule type" value="Genomic_DNA"/>
</dbReference>
<dbReference type="EMBL" id="Y16780">
    <property type="protein sequence ID" value="CAB54642.1"/>
    <property type="molecule type" value="Genomic_DNA"/>
</dbReference>
<dbReference type="PIR" id="H72155">
    <property type="entry name" value="H72155"/>
</dbReference>
<dbReference type="PIR" id="T28480">
    <property type="entry name" value="T28480"/>
</dbReference>
<dbReference type="RefSeq" id="NP_042086.1">
    <property type="nucleotide sequence ID" value="NC_001611.1"/>
</dbReference>
<dbReference type="SMR" id="P0DOM2"/>
<dbReference type="GeneID" id="1486407"/>
<dbReference type="KEGG" id="vg:1486407"/>
<dbReference type="Proteomes" id="UP000111493">
    <property type="component" value="Segment"/>
</dbReference>
<dbReference type="Proteomes" id="UP000119805">
    <property type="component" value="Segment"/>
</dbReference>
<dbReference type="GO" id="GO:0005524">
    <property type="term" value="F:ATP binding"/>
    <property type="evidence" value="ECO:0007669"/>
    <property type="project" value="UniProtKB-KW"/>
</dbReference>
<dbReference type="GO" id="GO:0046872">
    <property type="term" value="F:metal ion binding"/>
    <property type="evidence" value="ECO:0007669"/>
    <property type="project" value="UniProtKB-KW"/>
</dbReference>
<dbReference type="GO" id="GO:1990817">
    <property type="term" value="F:poly(A) RNA polymerase activity"/>
    <property type="evidence" value="ECO:0007669"/>
    <property type="project" value="UniProtKB-EC"/>
</dbReference>
<dbReference type="GO" id="GO:0006397">
    <property type="term" value="P:mRNA processing"/>
    <property type="evidence" value="ECO:0007669"/>
    <property type="project" value="UniProtKB-KW"/>
</dbReference>
<dbReference type="CDD" id="cd20919">
    <property type="entry name" value="polyA_pol_Pox"/>
    <property type="match status" value="1"/>
</dbReference>
<dbReference type="Gene3D" id="1.20.1270.320">
    <property type="entry name" value="Poxvirus poly(A) polymerase, N domain"/>
    <property type="match status" value="1"/>
</dbReference>
<dbReference type="Gene3D" id="3.30.460.60">
    <property type="entry name" value="Poxvirus poly(A) polymerase, nucleotidyltransferase domain"/>
    <property type="match status" value="1"/>
</dbReference>
<dbReference type="InterPro" id="IPR004976">
    <property type="entry name" value="PolyA_pol_cat_Poxvir"/>
</dbReference>
<dbReference type="InterPro" id="IPR037265">
    <property type="entry name" value="PolyA_pol_cat_sf"/>
</dbReference>
<dbReference type="InterPro" id="IPR024231">
    <property type="entry name" value="PolyA_pol_nucTrfase_Poxvir"/>
</dbReference>
<dbReference type="InterPro" id="IPR038419">
    <property type="entry name" value="PolyA_pol_nucTrfase_sf_Poxvir"/>
</dbReference>
<dbReference type="InterPro" id="IPR024397">
    <property type="entry name" value="Poxvirus_polyA_pol_cat_C"/>
</dbReference>
<dbReference type="InterPro" id="IPR024398">
    <property type="entry name" value="Poxvirus_polyA_pol_cat_N"/>
</dbReference>
<dbReference type="InterPro" id="IPR038337">
    <property type="entry name" value="Poxvirus_polyA_pol_cat_N_sf"/>
</dbReference>
<dbReference type="Pfam" id="PF03296">
    <property type="entry name" value="Pox_polyA_pol"/>
    <property type="match status" value="1"/>
</dbReference>
<dbReference type="Pfam" id="PF12629">
    <property type="entry name" value="Pox_polyA_pol_C"/>
    <property type="match status" value="1"/>
</dbReference>
<dbReference type="Pfam" id="PF12630">
    <property type="entry name" value="Pox_polyA_pol_N"/>
    <property type="match status" value="1"/>
</dbReference>
<dbReference type="PIRSF" id="PIRSF015693">
    <property type="entry name" value="VAC-48L_nuct"/>
    <property type="match status" value="1"/>
</dbReference>
<dbReference type="SUPFAM" id="SSF160957">
    <property type="entry name" value="Poly(A) polymerase catalytic subunit-like"/>
    <property type="match status" value="1"/>
</dbReference>
<gene>
    <name type="primary">OPG063</name>
    <name type="synonym">PAPL</name>
    <name type="ORF">C1L</name>
    <name type="ORF">E1L</name>
</gene>
<sequence length="479" mass="55586">MNRNPDHNTFPNITLKIIETYLGRLPSVNEYHMLKLQTRNIQKITVFNKDIFVSLVKKNKKRFFSDVDTSASEIKDRILSYFSKQTQTYNIGKLFTIIELQSVLVTTYTNILGVLTIKAPNVISSKISYNVTSMEELARDMLNSMNVAVIDKAKVMGRHNVSSLVKNVNKLMEEYLRRHNKSCICYGSYSLYLINPNIRYGDIDILQTNSRTFLIDLAFLIKFITGNNIILSKIPYLRNYMVIKDENDNHIIDSFNIRQDTMNVVPKIFIDNIYIVDPTFQLLNMIKMFSQIDRLEDLSKDPEKFNARMATMLEYVRYTHGIVFDGKRNNMPMKCIIDENNRVVTVTTKDYFSFKKCLVYLDENVLSSDILDLNADTSCDFESVTNSVYLIHDNIMYTYFSNTILLSDKGKVHEISARGLCAHILLYQMLTSGAYKQCLSDLLNSMMNRDKIPIYSHTERDKKHGRHGFINIEKDIIVF</sequence>
<organismHost>
    <name type="scientific">Homo sapiens</name>
    <name type="common">Human</name>
    <dbReference type="NCBI Taxonomy" id="9606"/>
</organismHost>